<accession>P24923</accession>
<protein>
    <recommendedName>
        <fullName>Cell division control protein 2 homolog 1</fullName>
        <ecNumber>2.7.11.22</ecNumber>
        <ecNumber>2.7.11.23</ecNumber>
    </recommendedName>
</protein>
<gene>
    <name type="primary">CDC2A</name>
</gene>
<keyword id="KW-0067">ATP-binding</keyword>
<keyword id="KW-0131">Cell cycle</keyword>
<keyword id="KW-0132">Cell division</keyword>
<keyword id="KW-0418">Kinase</keyword>
<keyword id="KW-0498">Mitosis</keyword>
<keyword id="KW-0547">Nucleotide-binding</keyword>
<keyword id="KW-0597">Phosphoprotein</keyword>
<keyword id="KW-0723">Serine/threonine-protein kinase</keyword>
<keyword id="KW-0808">Transferase</keyword>
<sequence>GENVEKIGEGTYGVVYKARDRVTNETIALKKIRLEQEDEGVPSTAIREISLLKEMQHRNIVRLQDVVHSDKRLYLVFEYLDLDLKKHMDSSPEFIKDPRQVKMFLYQMLCGIAYCHSHRVLHRDLKPQNLLIDRRTNSLKLADFGLARAFGIPVRTFTHEVVTLWYRAPEILLGSRHYSTPVDVWSVGCIFAEMANRRPLSPGDSEIDELFKIFRILGTPNEDTWPGVTSLPDFKSTFPRWPSKDLATVVPNLEPAGLDLLNSMLCLDPTKRITARSAVEHEYFKDIKFVP</sequence>
<name>CDC21_MEDSA</name>
<evidence type="ECO:0000250" key="1"/>
<evidence type="ECO:0000255" key="2">
    <source>
        <dbReference type="PROSITE-ProRule" id="PRU00159"/>
    </source>
</evidence>
<evidence type="ECO:0000255" key="3">
    <source>
        <dbReference type="PROSITE-ProRule" id="PRU10027"/>
    </source>
</evidence>
<evidence type="ECO:0000305" key="4"/>
<comment type="function">
    <text>Plays a key role in the control of the eukaryotic cell cycle. Component of the kinase complex that phosphorylates the repetitive C-terminus of RNA polymerase II.</text>
</comment>
<comment type="catalytic activity">
    <reaction>
        <text>L-seryl-[protein] + ATP = O-phospho-L-seryl-[protein] + ADP + H(+)</text>
        <dbReference type="Rhea" id="RHEA:17989"/>
        <dbReference type="Rhea" id="RHEA-COMP:9863"/>
        <dbReference type="Rhea" id="RHEA-COMP:11604"/>
        <dbReference type="ChEBI" id="CHEBI:15378"/>
        <dbReference type="ChEBI" id="CHEBI:29999"/>
        <dbReference type="ChEBI" id="CHEBI:30616"/>
        <dbReference type="ChEBI" id="CHEBI:83421"/>
        <dbReference type="ChEBI" id="CHEBI:456216"/>
        <dbReference type="EC" id="2.7.11.22"/>
    </reaction>
</comment>
<comment type="catalytic activity">
    <reaction>
        <text>L-threonyl-[protein] + ATP = O-phospho-L-threonyl-[protein] + ADP + H(+)</text>
        <dbReference type="Rhea" id="RHEA:46608"/>
        <dbReference type="Rhea" id="RHEA-COMP:11060"/>
        <dbReference type="Rhea" id="RHEA-COMP:11605"/>
        <dbReference type="ChEBI" id="CHEBI:15378"/>
        <dbReference type="ChEBI" id="CHEBI:30013"/>
        <dbReference type="ChEBI" id="CHEBI:30616"/>
        <dbReference type="ChEBI" id="CHEBI:61977"/>
        <dbReference type="ChEBI" id="CHEBI:456216"/>
        <dbReference type="EC" id="2.7.11.22"/>
    </reaction>
</comment>
<comment type="catalytic activity">
    <reaction>
        <text>[DNA-directed RNA polymerase] + ATP = phospho-[DNA-directed RNA polymerase] + ADP + H(+)</text>
        <dbReference type="Rhea" id="RHEA:10216"/>
        <dbReference type="Rhea" id="RHEA-COMP:11321"/>
        <dbReference type="Rhea" id="RHEA-COMP:11322"/>
        <dbReference type="ChEBI" id="CHEBI:15378"/>
        <dbReference type="ChEBI" id="CHEBI:30616"/>
        <dbReference type="ChEBI" id="CHEBI:43176"/>
        <dbReference type="ChEBI" id="CHEBI:68546"/>
        <dbReference type="ChEBI" id="CHEBI:456216"/>
        <dbReference type="EC" id="2.7.11.23"/>
    </reaction>
</comment>
<comment type="activity regulation">
    <text evidence="1">Phosphorylation at Thr-11 or Tyr-12 inactivates the enzyme, while phosphorylation at Thr-158 activates it.</text>
</comment>
<comment type="tissue specificity">
    <text>Found in most organs including root, young leaf, stem, vegetative meristem and flower bud.</text>
</comment>
<comment type="similarity">
    <text evidence="4">Belongs to the protein kinase superfamily. CMGC Ser/Thr protein kinase family. CDC2/CDKX subfamily.</text>
</comment>
<feature type="chain" id="PRO_0000085753" description="Cell division control protein 2 homolog 1">
    <location>
        <begin position="1" status="less than"/>
        <end position="291"/>
    </location>
</feature>
<feature type="domain" description="Protein kinase" evidence="2">
    <location>
        <begin position="1"/>
        <end position="284"/>
    </location>
</feature>
<feature type="active site" description="Proton acceptor" evidence="2 3">
    <location>
        <position position="124"/>
    </location>
</feature>
<feature type="binding site" evidence="2">
    <location>
        <begin position="7"/>
        <end position="15"/>
    </location>
    <ligand>
        <name>ATP</name>
        <dbReference type="ChEBI" id="CHEBI:30616"/>
    </ligand>
</feature>
<feature type="binding site" evidence="2">
    <location>
        <position position="30"/>
    </location>
    <ligand>
        <name>ATP</name>
        <dbReference type="ChEBI" id="CHEBI:30616"/>
    </ligand>
</feature>
<feature type="modified residue" description="Phosphothreonine" evidence="1">
    <location>
        <position position="11"/>
    </location>
</feature>
<feature type="modified residue" description="Phosphotyrosine" evidence="1">
    <location>
        <position position="12"/>
    </location>
</feature>
<feature type="modified residue" description="Phosphothreonine; by CAK" evidence="1">
    <location>
        <position position="158"/>
    </location>
</feature>
<feature type="non-terminal residue">
    <location>
        <position position="1"/>
    </location>
</feature>
<reference key="1">
    <citation type="journal article" date="1991" name="Proc. Natl. Acad. Sci. U.S.A.">
        <title>Complementation of a yeast cell cycle mutant by an alfalfa cDNA encoding a protein kinase homologous to p34cdc2.</title>
        <authorList>
            <person name="Hirt H."/>
            <person name="Pay A."/>
            <person name="Gyoergyey J."/>
            <person name="Bako L."/>
            <person name="Nemeth K."/>
            <person name="Boegre L."/>
            <person name="Schweyen R.J."/>
            <person name="Heberle-Bors E."/>
            <person name="Dudits D."/>
        </authorList>
    </citation>
    <scope>NUCLEOTIDE SEQUENCE [MRNA]</scope>
</reference>
<proteinExistence type="evidence at transcript level"/>
<organism>
    <name type="scientific">Medicago sativa</name>
    <name type="common">Alfalfa</name>
    <dbReference type="NCBI Taxonomy" id="3879"/>
    <lineage>
        <taxon>Eukaryota</taxon>
        <taxon>Viridiplantae</taxon>
        <taxon>Streptophyta</taxon>
        <taxon>Embryophyta</taxon>
        <taxon>Tracheophyta</taxon>
        <taxon>Spermatophyta</taxon>
        <taxon>Magnoliopsida</taxon>
        <taxon>eudicotyledons</taxon>
        <taxon>Gunneridae</taxon>
        <taxon>Pentapetalae</taxon>
        <taxon>rosids</taxon>
        <taxon>fabids</taxon>
        <taxon>Fabales</taxon>
        <taxon>Fabaceae</taxon>
        <taxon>Papilionoideae</taxon>
        <taxon>50 kb inversion clade</taxon>
        <taxon>NPAAA clade</taxon>
        <taxon>Hologalegina</taxon>
        <taxon>IRL clade</taxon>
        <taxon>Trifolieae</taxon>
        <taxon>Medicago</taxon>
    </lineage>
</organism>
<dbReference type="EC" id="2.7.11.22"/>
<dbReference type="EC" id="2.7.11.23"/>
<dbReference type="EMBL" id="M58365">
    <property type="protein sequence ID" value="AAB41817.1"/>
    <property type="molecule type" value="mRNA"/>
</dbReference>
<dbReference type="PIR" id="A39107">
    <property type="entry name" value="A39107"/>
</dbReference>
<dbReference type="SMR" id="P24923"/>
<dbReference type="GO" id="GO:0000307">
    <property type="term" value="C:cyclin-dependent protein kinase holoenzyme complex"/>
    <property type="evidence" value="ECO:0007669"/>
    <property type="project" value="TreeGrafter"/>
</dbReference>
<dbReference type="GO" id="GO:0005737">
    <property type="term" value="C:cytoplasm"/>
    <property type="evidence" value="ECO:0007669"/>
    <property type="project" value="TreeGrafter"/>
</dbReference>
<dbReference type="GO" id="GO:0005634">
    <property type="term" value="C:nucleus"/>
    <property type="evidence" value="ECO:0007669"/>
    <property type="project" value="TreeGrafter"/>
</dbReference>
<dbReference type="GO" id="GO:0005524">
    <property type="term" value="F:ATP binding"/>
    <property type="evidence" value="ECO:0007669"/>
    <property type="project" value="UniProtKB-KW"/>
</dbReference>
<dbReference type="GO" id="GO:0030332">
    <property type="term" value="F:cyclin binding"/>
    <property type="evidence" value="ECO:0007669"/>
    <property type="project" value="TreeGrafter"/>
</dbReference>
<dbReference type="GO" id="GO:0004693">
    <property type="term" value="F:cyclin-dependent protein serine/threonine kinase activity"/>
    <property type="evidence" value="ECO:0007669"/>
    <property type="project" value="UniProtKB-EC"/>
</dbReference>
<dbReference type="GO" id="GO:0106310">
    <property type="term" value="F:protein serine kinase activity"/>
    <property type="evidence" value="ECO:0007669"/>
    <property type="project" value="RHEA"/>
</dbReference>
<dbReference type="GO" id="GO:0008353">
    <property type="term" value="F:RNA polymerase II CTD heptapeptide repeat kinase activity"/>
    <property type="evidence" value="ECO:0007669"/>
    <property type="project" value="UniProtKB-EC"/>
</dbReference>
<dbReference type="GO" id="GO:0051301">
    <property type="term" value="P:cell division"/>
    <property type="evidence" value="ECO:0007669"/>
    <property type="project" value="UniProtKB-KW"/>
</dbReference>
<dbReference type="GO" id="GO:0000082">
    <property type="term" value="P:G1/S transition of mitotic cell cycle"/>
    <property type="evidence" value="ECO:0007669"/>
    <property type="project" value="TreeGrafter"/>
</dbReference>
<dbReference type="GO" id="GO:0010389">
    <property type="term" value="P:regulation of G2/M transition of mitotic cell cycle"/>
    <property type="evidence" value="ECO:0007669"/>
    <property type="project" value="TreeGrafter"/>
</dbReference>
<dbReference type="GO" id="GO:0051445">
    <property type="term" value="P:regulation of meiotic cell cycle"/>
    <property type="evidence" value="ECO:0007669"/>
    <property type="project" value="TreeGrafter"/>
</dbReference>
<dbReference type="GO" id="GO:0007165">
    <property type="term" value="P:signal transduction"/>
    <property type="evidence" value="ECO:0007669"/>
    <property type="project" value="TreeGrafter"/>
</dbReference>
<dbReference type="CDD" id="cd07835">
    <property type="entry name" value="STKc_CDK1_CdkB_like"/>
    <property type="match status" value="1"/>
</dbReference>
<dbReference type="FunFam" id="3.30.200.20:FF:000187">
    <property type="entry name" value="Cell division control protein 2"/>
    <property type="match status" value="1"/>
</dbReference>
<dbReference type="FunFam" id="1.10.510.10:FF:000280">
    <property type="entry name" value="Cell division control protein 2 homolog"/>
    <property type="match status" value="1"/>
</dbReference>
<dbReference type="Gene3D" id="3.30.200.20">
    <property type="entry name" value="Phosphorylase Kinase, domain 1"/>
    <property type="match status" value="1"/>
</dbReference>
<dbReference type="Gene3D" id="1.10.510.10">
    <property type="entry name" value="Transferase(Phosphotransferase) domain 1"/>
    <property type="match status" value="1"/>
</dbReference>
<dbReference type="InterPro" id="IPR050108">
    <property type="entry name" value="CDK"/>
</dbReference>
<dbReference type="InterPro" id="IPR011009">
    <property type="entry name" value="Kinase-like_dom_sf"/>
</dbReference>
<dbReference type="InterPro" id="IPR000719">
    <property type="entry name" value="Prot_kinase_dom"/>
</dbReference>
<dbReference type="InterPro" id="IPR017441">
    <property type="entry name" value="Protein_kinase_ATP_BS"/>
</dbReference>
<dbReference type="InterPro" id="IPR008271">
    <property type="entry name" value="Ser/Thr_kinase_AS"/>
</dbReference>
<dbReference type="PANTHER" id="PTHR24056">
    <property type="entry name" value="CELL DIVISION PROTEIN KINASE"/>
    <property type="match status" value="1"/>
</dbReference>
<dbReference type="PANTHER" id="PTHR24056:SF548">
    <property type="entry name" value="CYCLIN-DEPENDENT KINASE A-1"/>
    <property type="match status" value="1"/>
</dbReference>
<dbReference type="Pfam" id="PF00069">
    <property type="entry name" value="Pkinase"/>
    <property type="match status" value="1"/>
</dbReference>
<dbReference type="SMART" id="SM00220">
    <property type="entry name" value="S_TKc"/>
    <property type="match status" value="1"/>
</dbReference>
<dbReference type="SUPFAM" id="SSF56112">
    <property type="entry name" value="Protein kinase-like (PK-like)"/>
    <property type="match status" value="1"/>
</dbReference>
<dbReference type="PROSITE" id="PS00107">
    <property type="entry name" value="PROTEIN_KINASE_ATP"/>
    <property type="match status" value="1"/>
</dbReference>
<dbReference type="PROSITE" id="PS50011">
    <property type="entry name" value="PROTEIN_KINASE_DOM"/>
    <property type="match status" value="1"/>
</dbReference>
<dbReference type="PROSITE" id="PS00108">
    <property type="entry name" value="PROTEIN_KINASE_ST"/>
    <property type="match status" value="1"/>
</dbReference>